<reference key="1">
    <citation type="journal article" date="2007" name="Comp. Biochem. Physiol.">
        <title>Comparative molecular characterization of ADSS1 and ADSS2 genes in pig (Sus scrofa).</title>
        <authorList>
            <person name="Li X."/>
            <person name="Zhu Z."/>
            <person name="Mo D."/>
            <person name="Wang H."/>
            <person name="Yang S."/>
            <person name="Zhao S."/>
            <person name="Li K."/>
        </authorList>
    </citation>
    <scope>NUCLEOTIDE SEQUENCE [MRNA]</scope>
    <scope>TISSUE SPECIFICITY</scope>
</reference>
<comment type="function">
    <text evidence="1">Component of the purine nucleotide cycle (PNC), which interconverts IMP and AMP to regulate the nucleotide levels in various tissues, and which contributes to glycolysis and ammoniagenesis. Catalyzes the first committed step in the biosynthesis of AMP from IMP.</text>
</comment>
<comment type="catalytic activity">
    <reaction evidence="2">
        <text>IMP + L-aspartate + GTP = N(6)-(1,2-dicarboxyethyl)-AMP + GDP + phosphate + 2 H(+)</text>
        <dbReference type="Rhea" id="RHEA:15753"/>
        <dbReference type="ChEBI" id="CHEBI:15378"/>
        <dbReference type="ChEBI" id="CHEBI:29991"/>
        <dbReference type="ChEBI" id="CHEBI:37565"/>
        <dbReference type="ChEBI" id="CHEBI:43474"/>
        <dbReference type="ChEBI" id="CHEBI:57567"/>
        <dbReference type="ChEBI" id="CHEBI:58053"/>
        <dbReference type="ChEBI" id="CHEBI:58189"/>
        <dbReference type="EC" id="6.3.4.4"/>
    </reaction>
</comment>
<comment type="cofactor">
    <cofactor evidence="2">
        <name>Mg(2+)</name>
        <dbReference type="ChEBI" id="CHEBI:18420"/>
    </cofactor>
    <text evidence="2">Binds 1 Mg(2+) ion per subunit.</text>
</comment>
<comment type="pathway">
    <text evidence="2">Purine metabolism; AMP biosynthesis via de novo pathway; AMP from IMP: step 1/2.</text>
</comment>
<comment type="subunit">
    <text evidence="2">Homodimer.</text>
</comment>
<comment type="subcellular location">
    <subcellularLocation>
        <location evidence="2">Cytoplasm</location>
    </subcellularLocation>
</comment>
<comment type="tissue specificity">
    <text evidence="4">Predominantly expressed in the striated muscle tissues.</text>
</comment>
<comment type="similarity">
    <text evidence="2">Belongs to the adenylosuccinate synthetase family.</text>
</comment>
<keyword id="KW-0963">Cytoplasm</keyword>
<keyword id="KW-0342">GTP-binding</keyword>
<keyword id="KW-0436">Ligase</keyword>
<keyword id="KW-0460">Magnesium</keyword>
<keyword id="KW-0479">Metal-binding</keyword>
<keyword id="KW-0547">Nucleotide-binding</keyword>
<keyword id="KW-0658">Purine biosynthesis</keyword>
<keyword id="KW-1185">Reference proteome</keyword>
<feature type="chain" id="PRO_0000321961" description="Adenylosuccinate synthetase isozyme 1">
    <location>
        <begin position="1"/>
        <end position="457"/>
    </location>
</feature>
<feature type="region of interest" description="Disordered" evidence="3">
    <location>
        <begin position="1"/>
        <end position="25"/>
    </location>
</feature>
<feature type="active site" description="Proton acceptor" evidence="2">
    <location>
        <position position="43"/>
    </location>
</feature>
<feature type="active site" description="Proton donor" evidence="2">
    <location>
        <position position="71"/>
    </location>
</feature>
<feature type="binding site" evidence="2">
    <location>
        <begin position="42"/>
        <end position="48"/>
    </location>
    <ligand>
        <name>GTP</name>
        <dbReference type="ChEBI" id="CHEBI:37565"/>
    </ligand>
</feature>
<feature type="binding site" description="in other chain" evidence="2">
    <location>
        <begin position="43"/>
        <end position="46"/>
    </location>
    <ligand>
        <name>IMP</name>
        <dbReference type="ChEBI" id="CHEBI:58053"/>
        <note>ligand shared between dimeric partners</note>
    </ligand>
</feature>
<feature type="binding site" evidence="2">
    <location>
        <position position="43"/>
    </location>
    <ligand>
        <name>Mg(2+)</name>
        <dbReference type="ChEBI" id="CHEBI:18420"/>
    </ligand>
</feature>
<feature type="binding site" evidence="2">
    <location>
        <position position="43"/>
    </location>
    <ligand>
        <name>substrate</name>
    </ligand>
</feature>
<feature type="binding site" description="in other chain" evidence="2">
    <location>
        <begin position="68"/>
        <end position="71"/>
    </location>
    <ligand>
        <name>IMP</name>
        <dbReference type="ChEBI" id="CHEBI:58053"/>
        <note>ligand shared between dimeric partners</note>
    </ligand>
</feature>
<feature type="binding site" evidence="2">
    <location>
        <begin position="70"/>
        <end position="72"/>
    </location>
    <ligand>
        <name>GTP</name>
        <dbReference type="ChEBI" id="CHEBI:37565"/>
    </ligand>
</feature>
<feature type="binding site" evidence="2">
    <location>
        <position position="70"/>
    </location>
    <ligand>
        <name>Mg(2+)</name>
        <dbReference type="ChEBI" id="CHEBI:18420"/>
    </ligand>
</feature>
<feature type="binding site" description="in other chain" evidence="2">
    <location>
        <position position="163"/>
    </location>
    <ligand>
        <name>IMP</name>
        <dbReference type="ChEBI" id="CHEBI:58053"/>
        <note>ligand shared between dimeric partners</note>
    </ligand>
</feature>
<feature type="binding site" evidence="2">
    <location>
        <position position="177"/>
    </location>
    <ligand>
        <name>IMP</name>
        <dbReference type="ChEBI" id="CHEBI:58053"/>
        <note>ligand shared between dimeric partners</note>
    </ligand>
</feature>
<feature type="binding site" description="in other chain" evidence="2">
    <location>
        <position position="256"/>
    </location>
    <ligand>
        <name>IMP</name>
        <dbReference type="ChEBI" id="CHEBI:58053"/>
        <note>ligand shared between dimeric partners</note>
    </ligand>
</feature>
<feature type="binding site" description="in other chain" evidence="2">
    <location>
        <position position="271"/>
    </location>
    <ligand>
        <name>IMP</name>
        <dbReference type="ChEBI" id="CHEBI:58053"/>
        <note>ligand shared between dimeric partners</note>
    </ligand>
</feature>
<feature type="binding site" evidence="2">
    <location>
        <begin position="331"/>
        <end position="337"/>
    </location>
    <ligand>
        <name>substrate</name>
    </ligand>
</feature>
<feature type="binding site" description="in other chain" evidence="2">
    <location>
        <position position="335"/>
    </location>
    <ligand>
        <name>IMP</name>
        <dbReference type="ChEBI" id="CHEBI:58053"/>
        <note>ligand shared between dimeric partners</note>
    </ligand>
</feature>
<feature type="binding site" evidence="2">
    <location>
        <position position="337"/>
    </location>
    <ligand>
        <name>GTP</name>
        <dbReference type="ChEBI" id="CHEBI:37565"/>
    </ligand>
</feature>
<feature type="binding site" evidence="2">
    <location>
        <begin position="363"/>
        <end position="365"/>
    </location>
    <ligand>
        <name>GTP</name>
        <dbReference type="ChEBI" id="CHEBI:37565"/>
    </ligand>
</feature>
<feature type="binding site" evidence="2">
    <location>
        <begin position="445"/>
        <end position="448"/>
    </location>
    <ligand>
        <name>GTP</name>
        <dbReference type="ChEBI" id="CHEBI:37565"/>
    </ligand>
</feature>
<proteinExistence type="evidence at transcript level"/>
<accession>A4Z6H0</accession>
<name>PURA1_PIG</name>
<protein>
    <recommendedName>
        <fullName evidence="2">Adenylosuccinate synthetase isozyme 1</fullName>
        <shortName evidence="2">AMPSase 1</shortName>
        <shortName evidence="2">AdSS 1</shortName>
        <ecNumber evidence="2">6.3.4.4</ecNumber>
    </recommendedName>
    <alternativeName>
        <fullName evidence="2">Adenylosuccinate synthetase, basic isozyme</fullName>
    </alternativeName>
    <alternativeName>
        <fullName evidence="2">Adenylosuccinate synthetase, muscle isozyme</fullName>
        <shortName evidence="2">M-type adenylosuccinate synthetase</shortName>
    </alternativeName>
    <alternativeName>
        <fullName evidence="2">IMP--aspartate ligase 1</fullName>
    </alternativeName>
</protein>
<sequence length="457" mass="50098">MSGTRASNDRPPSAGGVKRGRLQHEAATTGSRVTVVLGAQWGDEGKGKVVDLLATDADIISRCQGGNNAGHTVVVDGKEYDFHLLPSGIINTKAVSFIGNGVVVHLPGLFEEAEKNEKKGLKDWEKRLIISDRAHLVFDFHQAVDGLQEVQRQAQEGKNIGTTRKGIGPAYSSKAARAGLRVCDLLSDFDEFSARFRNLARQHQSMFPTLETDVEGQLKKLKGFAERIRPMVRDGVYFMYEALHGPPKKILVEGANAALLDIGFGTCPFVTSSNCTVGGVCTGLGIPPQNIGEVYGVVKAYTTRVGVGAFPTEQINETGDLLQSRGHEWGVTTGRKRRCGWLDLMILRYAHMINGFTALALTKLDILDTLDEVKVGVSYKLSGKRIPYFPANQEILQKVEVEYETLPGWKTDTTGARKWEDLPPQAQSYIRFVENHVGVAVKWVGVGKSRDSMIQLF</sequence>
<evidence type="ECO:0000250" key="1">
    <source>
        <dbReference type="UniProtKB" id="Q8N142"/>
    </source>
</evidence>
<evidence type="ECO:0000255" key="2">
    <source>
        <dbReference type="HAMAP-Rule" id="MF_03126"/>
    </source>
</evidence>
<evidence type="ECO:0000256" key="3">
    <source>
        <dbReference type="SAM" id="MobiDB-lite"/>
    </source>
</evidence>
<evidence type="ECO:0000269" key="4">
    <source>
    </source>
</evidence>
<gene>
    <name evidence="2" type="primary">ADSS1</name>
    <name evidence="2" type="synonym">ADSSL1</name>
</gene>
<dbReference type="EC" id="6.3.4.4" evidence="2"/>
<dbReference type="EMBL" id="DQ462751">
    <property type="protein sequence ID" value="ABE73154.1"/>
    <property type="molecule type" value="mRNA"/>
</dbReference>
<dbReference type="RefSeq" id="NP_001090978.1">
    <property type="nucleotide sequence ID" value="NM_001097509.1"/>
</dbReference>
<dbReference type="SMR" id="A4Z6H0"/>
<dbReference type="FunCoup" id="A4Z6H0">
    <property type="interactions" value="865"/>
</dbReference>
<dbReference type="STRING" id="9823.ENSSSCP00000053324"/>
<dbReference type="PaxDb" id="9823-ENSSSCP00000020236"/>
<dbReference type="PeptideAtlas" id="A4Z6H0"/>
<dbReference type="GeneID" id="100048943"/>
<dbReference type="KEGG" id="ssc:100048943"/>
<dbReference type="CTD" id="122622"/>
<dbReference type="eggNOG" id="KOG1355">
    <property type="taxonomic scope" value="Eukaryota"/>
</dbReference>
<dbReference type="InParanoid" id="A4Z6H0"/>
<dbReference type="OrthoDB" id="10265645at2759"/>
<dbReference type="BRENDA" id="6.3.4.4">
    <property type="organism ID" value="6170"/>
</dbReference>
<dbReference type="UniPathway" id="UPA00075">
    <property type="reaction ID" value="UER00335"/>
</dbReference>
<dbReference type="Proteomes" id="UP000008227">
    <property type="component" value="Unplaced"/>
</dbReference>
<dbReference type="Proteomes" id="UP000314985">
    <property type="component" value="Unplaced"/>
</dbReference>
<dbReference type="Proteomes" id="UP000694570">
    <property type="component" value="Unplaced"/>
</dbReference>
<dbReference type="Proteomes" id="UP000694571">
    <property type="component" value="Unplaced"/>
</dbReference>
<dbReference type="Proteomes" id="UP000694720">
    <property type="component" value="Unplaced"/>
</dbReference>
<dbReference type="Proteomes" id="UP000694722">
    <property type="component" value="Unplaced"/>
</dbReference>
<dbReference type="Proteomes" id="UP000694723">
    <property type="component" value="Unplaced"/>
</dbReference>
<dbReference type="Proteomes" id="UP000694724">
    <property type="component" value="Unplaced"/>
</dbReference>
<dbReference type="Proteomes" id="UP000694725">
    <property type="component" value="Unplaced"/>
</dbReference>
<dbReference type="Proteomes" id="UP000694726">
    <property type="component" value="Unplaced"/>
</dbReference>
<dbReference type="Proteomes" id="UP000694727">
    <property type="component" value="Unplaced"/>
</dbReference>
<dbReference type="Proteomes" id="UP000694728">
    <property type="component" value="Unplaced"/>
</dbReference>
<dbReference type="GO" id="GO:0005737">
    <property type="term" value="C:cytoplasm"/>
    <property type="evidence" value="ECO:0000318"/>
    <property type="project" value="GO_Central"/>
</dbReference>
<dbReference type="GO" id="GO:0004019">
    <property type="term" value="F:adenylosuccinate synthase activity"/>
    <property type="evidence" value="ECO:0000250"/>
    <property type="project" value="UniProtKB"/>
</dbReference>
<dbReference type="GO" id="GO:0005525">
    <property type="term" value="F:GTP binding"/>
    <property type="evidence" value="ECO:0007669"/>
    <property type="project" value="UniProtKB-UniRule"/>
</dbReference>
<dbReference type="GO" id="GO:0000287">
    <property type="term" value="F:magnesium ion binding"/>
    <property type="evidence" value="ECO:0007669"/>
    <property type="project" value="UniProtKB-UniRule"/>
</dbReference>
<dbReference type="GO" id="GO:0044208">
    <property type="term" value="P:'de novo' AMP biosynthetic process"/>
    <property type="evidence" value="ECO:0000318"/>
    <property type="project" value="GO_Central"/>
</dbReference>
<dbReference type="GO" id="GO:0046040">
    <property type="term" value="P:IMP metabolic process"/>
    <property type="evidence" value="ECO:0000318"/>
    <property type="project" value="GO_Central"/>
</dbReference>
<dbReference type="CDD" id="cd03108">
    <property type="entry name" value="AdSS"/>
    <property type="match status" value="1"/>
</dbReference>
<dbReference type="FunFam" id="3.90.170.10:FF:000001">
    <property type="entry name" value="Adenylosuccinate synthetase"/>
    <property type="match status" value="1"/>
</dbReference>
<dbReference type="FunFam" id="1.10.300.10:FF:000002">
    <property type="entry name" value="Adenylosuccinate synthetase, chloroplastic"/>
    <property type="match status" value="1"/>
</dbReference>
<dbReference type="Gene3D" id="3.40.440.10">
    <property type="entry name" value="Adenylosuccinate Synthetase, subunit A, domain 1"/>
    <property type="match status" value="1"/>
</dbReference>
<dbReference type="Gene3D" id="1.10.300.10">
    <property type="entry name" value="Adenylosuccinate Synthetase, subunit A, domain 2"/>
    <property type="match status" value="1"/>
</dbReference>
<dbReference type="Gene3D" id="3.90.170.10">
    <property type="entry name" value="Adenylosuccinate Synthetase, subunit A, domain 3"/>
    <property type="match status" value="1"/>
</dbReference>
<dbReference type="HAMAP" id="MF_00011">
    <property type="entry name" value="Adenylosucc_synth"/>
    <property type="match status" value="1"/>
</dbReference>
<dbReference type="HAMAP" id="MF_03126">
    <property type="entry name" value="Adenylosucc_synth_vert_basic"/>
    <property type="match status" value="1"/>
</dbReference>
<dbReference type="InterPro" id="IPR018220">
    <property type="entry name" value="Adenylosuccin_syn_GTP-bd"/>
</dbReference>
<dbReference type="InterPro" id="IPR033128">
    <property type="entry name" value="Adenylosuccin_syn_Lys_AS"/>
</dbReference>
<dbReference type="InterPro" id="IPR042109">
    <property type="entry name" value="Adenylosuccinate_synth_dom1"/>
</dbReference>
<dbReference type="InterPro" id="IPR042110">
    <property type="entry name" value="Adenylosuccinate_synth_dom2"/>
</dbReference>
<dbReference type="InterPro" id="IPR042111">
    <property type="entry name" value="Adenylosuccinate_synth_dom3"/>
</dbReference>
<dbReference type="InterPro" id="IPR001114">
    <property type="entry name" value="Adenylosuccinate_synthetase"/>
</dbReference>
<dbReference type="InterPro" id="IPR027509">
    <property type="entry name" value="AdSS_1_vert"/>
</dbReference>
<dbReference type="InterPro" id="IPR027417">
    <property type="entry name" value="P-loop_NTPase"/>
</dbReference>
<dbReference type="NCBIfam" id="NF002223">
    <property type="entry name" value="PRK01117.1"/>
    <property type="match status" value="1"/>
</dbReference>
<dbReference type="NCBIfam" id="TIGR00184">
    <property type="entry name" value="purA"/>
    <property type="match status" value="1"/>
</dbReference>
<dbReference type="PANTHER" id="PTHR11846">
    <property type="entry name" value="ADENYLOSUCCINATE SYNTHETASE"/>
    <property type="match status" value="1"/>
</dbReference>
<dbReference type="PANTHER" id="PTHR11846:SF2">
    <property type="entry name" value="ADENYLOSUCCINATE SYNTHETASE ISOZYME 1"/>
    <property type="match status" value="1"/>
</dbReference>
<dbReference type="Pfam" id="PF00709">
    <property type="entry name" value="Adenylsucc_synt"/>
    <property type="match status" value="1"/>
</dbReference>
<dbReference type="SMART" id="SM00788">
    <property type="entry name" value="Adenylsucc_synt"/>
    <property type="match status" value="1"/>
</dbReference>
<dbReference type="SUPFAM" id="SSF52540">
    <property type="entry name" value="P-loop containing nucleoside triphosphate hydrolases"/>
    <property type="match status" value="1"/>
</dbReference>
<dbReference type="PROSITE" id="PS01266">
    <property type="entry name" value="ADENYLOSUCCIN_SYN_1"/>
    <property type="match status" value="1"/>
</dbReference>
<dbReference type="PROSITE" id="PS00513">
    <property type="entry name" value="ADENYLOSUCCIN_SYN_2"/>
    <property type="match status" value="1"/>
</dbReference>
<organism>
    <name type="scientific">Sus scrofa</name>
    <name type="common">Pig</name>
    <dbReference type="NCBI Taxonomy" id="9823"/>
    <lineage>
        <taxon>Eukaryota</taxon>
        <taxon>Metazoa</taxon>
        <taxon>Chordata</taxon>
        <taxon>Craniata</taxon>
        <taxon>Vertebrata</taxon>
        <taxon>Euteleostomi</taxon>
        <taxon>Mammalia</taxon>
        <taxon>Eutheria</taxon>
        <taxon>Laurasiatheria</taxon>
        <taxon>Artiodactyla</taxon>
        <taxon>Suina</taxon>
        <taxon>Suidae</taxon>
        <taxon>Sus</taxon>
    </lineage>
</organism>